<proteinExistence type="inferred from homology"/>
<feature type="chain" id="PRO_1000138100" description="HTH-type transcriptional regulator IscR">
    <location>
        <begin position="1"/>
        <end position="162"/>
    </location>
</feature>
<feature type="domain" description="HTH rrf2-type" evidence="1">
    <location>
        <begin position="2"/>
        <end position="131"/>
    </location>
</feature>
<feature type="DNA-binding region" description="H-T-H motif" evidence="1">
    <location>
        <begin position="28"/>
        <end position="51"/>
    </location>
</feature>
<feature type="region of interest" description="Disordered" evidence="2">
    <location>
        <begin position="140"/>
        <end position="162"/>
    </location>
</feature>
<feature type="compositionally biased region" description="Basic and acidic residues" evidence="2">
    <location>
        <begin position="143"/>
        <end position="162"/>
    </location>
</feature>
<feature type="binding site" evidence="1">
    <location>
        <position position="92"/>
    </location>
    <ligand>
        <name>[2Fe-2S] cluster</name>
        <dbReference type="ChEBI" id="CHEBI:190135"/>
    </ligand>
</feature>
<feature type="binding site" evidence="1">
    <location>
        <position position="98"/>
    </location>
    <ligand>
        <name>[2Fe-2S] cluster</name>
        <dbReference type="ChEBI" id="CHEBI:190135"/>
    </ligand>
</feature>
<feature type="binding site" evidence="1">
    <location>
        <position position="104"/>
    </location>
    <ligand>
        <name>[2Fe-2S] cluster</name>
        <dbReference type="ChEBI" id="CHEBI:190135"/>
    </ligand>
</feature>
<comment type="function">
    <text evidence="1">Regulates the transcription of several operons and genes involved in the biogenesis of Fe-S clusters and Fe-S-containing proteins.</text>
</comment>
<comment type="cofactor">
    <cofactor evidence="1">
        <name>[2Fe-2S] cluster</name>
        <dbReference type="ChEBI" id="CHEBI:190135"/>
    </cofactor>
    <text evidence="1">Binds 1 [2Fe-2S] cluster.</text>
</comment>
<sequence>MRLTSKGRYAVTAMLDVALNSEAGPVPLADISERQGISLSYLEQLFSRLRKNGLVSSVRGPGGGYLLGKDASSIAVGEVISAVDESVDATRCQGKGGCQGGDKCLTHALWRDLSDRLTGFLNNITLGELVNNQEVLDVSGRQHTHDAPRTRTQDAIDVKLRA</sequence>
<gene>
    <name evidence="1" type="primary">iscR</name>
    <name type="ordered locus">EcSMS35_2684</name>
</gene>
<reference key="1">
    <citation type="journal article" date="2008" name="J. Bacteriol.">
        <title>Insights into the environmental resistance gene pool from the genome sequence of the multidrug-resistant environmental isolate Escherichia coli SMS-3-5.</title>
        <authorList>
            <person name="Fricke W.F."/>
            <person name="Wright M.S."/>
            <person name="Lindell A.H."/>
            <person name="Harkins D.M."/>
            <person name="Baker-Austin C."/>
            <person name="Ravel J."/>
            <person name="Stepanauskas R."/>
        </authorList>
    </citation>
    <scope>NUCLEOTIDE SEQUENCE [LARGE SCALE GENOMIC DNA]</scope>
    <source>
        <strain>SMS-3-5 / SECEC</strain>
    </source>
</reference>
<protein>
    <recommendedName>
        <fullName evidence="1">HTH-type transcriptional regulator IscR</fullName>
    </recommendedName>
</protein>
<dbReference type="EMBL" id="CP000970">
    <property type="protein sequence ID" value="ACB19942.1"/>
    <property type="molecule type" value="Genomic_DNA"/>
</dbReference>
<dbReference type="RefSeq" id="WP_001241357.1">
    <property type="nucleotide sequence ID" value="NC_010498.1"/>
</dbReference>
<dbReference type="SMR" id="B1LNI7"/>
<dbReference type="GeneID" id="86947421"/>
<dbReference type="KEGG" id="ecm:EcSMS35_2684"/>
<dbReference type="HOGENOM" id="CLU_107144_0_0_6"/>
<dbReference type="Proteomes" id="UP000007011">
    <property type="component" value="Chromosome"/>
</dbReference>
<dbReference type="GO" id="GO:0005829">
    <property type="term" value="C:cytosol"/>
    <property type="evidence" value="ECO:0007669"/>
    <property type="project" value="TreeGrafter"/>
</dbReference>
<dbReference type="GO" id="GO:0051537">
    <property type="term" value="F:2 iron, 2 sulfur cluster binding"/>
    <property type="evidence" value="ECO:0007669"/>
    <property type="project" value="UniProtKB-KW"/>
</dbReference>
<dbReference type="GO" id="GO:0003700">
    <property type="term" value="F:DNA-binding transcription factor activity"/>
    <property type="evidence" value="ECO:0007669"/>
    <property type="project" value="UniProtKB-UniRule"/>
</dbReference>
<dbReference type="GO" id="GO:0003690">
    <property type="term" value="F:double-stranded DNA binding"/>
    <property type="evidence" value="ECO:0007669"/>
    <property type="project" value="UniProtKB-UniRule"/>
</dbReference>
<dbReference type="GO" id="GO:0005506">
    <property type="term" value="F:iron ion binding"/>
    <property type="evidence" value="ECO:0007669"/>
    <property type="project" value="UniProtKB-UniRule"/>
</dbReference>
<dbReference type="FunFam" id="1.10.10.10:FF:000026">
    <property type="entry name" value="HTH-type transcriptional regulator IscR"/>
    <property type="match status" value="1"/>
</dbReference>
<dbReference type="Gene3D" id="1.10.10.10">
    <property type="entry name" value="Winged helix-like DNA-binding domain superfamily/Winged helix DNA-binding domain"/>
    <property type="match status" value="1"/>
</dbReference>
<dbReference type="HAMAP" id="MF_01176">
    <property type="entry name" value="HTH_type_IscR"/>
    <property type="match status" value="1"/>
</dbReference>
<dbReference type="InterPro" id="IPR010242">
    <property type="entry name" value="TF_HTH_IscR"/>
</dbReference>
<dbReference type="InterPro" id="IPR030489">
    <property type="entry name" value="TR_Rrf2-type_CS"/>
</dbReference>
<dbReference type="InterPro" id="IPR000944">
    <property type="entry name" value="Tscrpt_reg_Rrf2"/>
</dbReference>
<dbReference type="InterPro" id="IPR036388">
    <property type="entry name" value="WH-like_DNA-bd_sf"/>
</dbReference>
<dbReference type="InterPro" id="IPR036390">
    <property type="entry name" value="WH_DNA-bd_sf"/>
</dbReference>
<dbReference type="NCBIfam" id="TIGR02010">
    <property type="entry name" value="IscR"/>
    <property type="match status" value="1"/>
</dbReference>
<dbReference type="NCBIfam" id="NF008110">
    <property type="entry name" value="PRK10857.1"/>
    <property type="match status" value="1"/>
</dbReference>
<dbReference type="NCBIfam" id="TIGR00738">
    <property type="entry name" value="rrf2_super"/>
    <property type="match status" value="1"/>
</dbReference>
<dbReference type="PANTHER" id="PTHR33221:SF5">
    <property type="entry name" value="HTH-TYPE TRANSCRIPTIONAL REGULATOR ISCR"/>
    <property type="match status" value="1"/>
</dbReference>
<dbReference type="PANTHER" id="PTHR33221">
    <property type="entry name" value="WINGED HELIX-TURN-HELIX TRANSCRIPTIONAL REGULATOR, RRF2 FAMILY"/>
    <property type="match status" value="1"/>
</dbReference>
<dbReference type="Pfam" id="PF02082">
    <property type="entry name" value="Rrf2"/>
    <property type="match status" value="1"/>
</dbReference>
<dbReference type="SUPFAM" id="SSF46785">
    <property type="entry name" value="Winged helix' DNA-binding domain"/>
    <property type="match status" value="1"/>
</dbReference>
<dbReference type="PROSITE" id="PS01332">
    <property type="entry name" value="HTH_RRF2_1"/>
    <property type="match status" value="1"/>
</dbReference>
<dbReference type="PROSITE" id="PS51197">
    <property type="entry name" value="HTH_RRF2_2"/>
    <property type="match status" value="1"/>
</dbReference>
<evidence type="ECO:0000255" key="1">
    <source>
        <dbReference type="HAMAP-Rule" id="MF_01176"/>
    </source>
</evidence>
<evidence type="ECO:0000256" key="2">
    <source>
        <dbReference type="SAM" id="MobiDB-lite"/>
    </source>
</evidence>
<name>ISCR_ECOSM</name>
<keyword id="KW-0001">2Fe-2S</keyword>
<keyword id="KW-0010">Activator</keyword>
<keyword id="KW-0238">DNA-binding</keyword>
<keyword id="KW-0408">Iron</keyword>
<keyword id="KW-0411">Iron-sulfur</keyword>
<keyword id="KW-0479">Metal-binding</keyword>
<keyword id="KW-0678">Repressor</keyword>
<keyword id="KW-0804">Transcription</keyword>
<keyword id="KW-0805">Transcription regulation</keyword>
<accession>B1LNI7</accession>
<organism>
    <name type="scientific">Escherichia coli (strain SMS-3-5 / SECEC)</name>
    <dbReference type="NCBI Taxonomy" id="439855"/>
    <lineage>
        <taxon>Bacteria</taxon>
        <taxon>Pseudomonadati</taxon>
        <taxon>Pseudomonadota</taxon>
        <taxon>Gammaproteobacteria</taxon>
        <taxon>Enterobacterales</taxon>
        <taxon>Enterobacteriaceae</taxon>
        <taxon>Escherichia</taxon>
    </lineage>
</organism>